<protein>
    <recommendedName>
        <fullName evidence="24">3',5'-cyclic-AMP phosphodiesterase 4A</fullName>
        <ecNumber evidence="7 8 10 14 15">3.1.4.53</ecNumber>
    </recommendedName>
    <alternativeName>
        <fullName>DPDE2</fullName>
    </alternativeName>
    <alternativeName>
        <fullName>PDE46</fullName>
    </alternativeName>
    <alternativeName>
        <fullName evidence="24">cAMP-specific phosphodiesterase 4A</fullName>
    </alternativeName>
</protein>
<feature type="chain" id="PRO_0000198806" description="3',5'-cyclic-AMP phosphodiesterase 4A">
    <location>
        <begin position="1"/>
        <end position="886"/>
    </location>
</feature>
<feature type="domain" description="PDEase" evidence="4">
    <location>
        <begin position="357"/>
        <end position="686"/>
    </location>
</feature>
<feature type="region of interest" description="Disordered" evidence="5">
    <location>
        <begin position="1"/>
        <end position="128"/>
    </location>
</feature>
<feature type="region of interest" description="Disordered" evidence="5">
    <location>
        <begin position="294"/>
        <end position="331"/>
    </location>
</feature>
<feature type="region of interest" description="Disordered" evidence="5">
    <location>
        <begin position="682"/>
        <end position="705"/>
    </location>
</feature>
<feature type="region of interest" description="Disordered" evidence="5">
    <location>
        <begin position="866"/>
        <end position="886"/>
    </location>
</feature>
<feature type="compositionally biased region" description="Low complexity" evidence="5">
    <location>
        <begin position="36"/>
        <end position="46"/>
    </location>
</feature>
<feature type="compositionally biased region" description="Basic and acidic residues" evidence="5">
    <location>
        <begin position="51"/>
        <end position="78"/>
    </location>
</feature>
<feature type="compositionally biased region" description="Gly residues" evidence="5">
    <location>
        <begin position="93"/>
        <end position="104"/>
    </location>
</feature>
<feature type="compositionally biased region" description="Pro residues" evidence="5">
    <location>
        <begin position="315"/>
        <end position="328"/>
    </location>
</feature>
<feature type="compositionally biased region" description="Gly residues" evidence="5">
    <location>
        <begin position="876"/>
        <end position="886"/>
    </location>
</feature>
<feature type="active site" description="Proton donor" evidence="2">
    <location>
        <position position="433"/>
    </location>
</feature>
<feature type="binding site" evidence="3">
    <location>
        <position position="433"/>
    </location>
    <ligand>
        <name>3',5'-cyclic AMP</name>
        <dbReference type="ChEBI" id="CHEBI:58165"/>
    </ligand>
</feature>
<feature type="binding site" evidence="2">
    <location>
        <position position="433"/>
    </location>
    <ligand>
        <name>AMP</name>
        <dbReference type="ChEBI" id="CHEBI:456215"/>
    </ligand>
</feature>
<feature type="binding site" evidence="2">
    <location>
        <position position="437"/>
    </location>
    <ligand>
        <name>AMP</name>
        <dbReference type="ChEBI" id="CHEBI:456215"/>
    </ligand>
</feature>
<feature type="binding site" evidence="9 16 33 34">
    <location>
        <position position="437"/>
    </location>
    <ligand>
        <name>Zn(2+)</name>
        <dbReference type="ChEBI" id="CHEBI:29105"/>
        <label>1</label>
    </ligand>
</feature>
<feature type="binding site" evidence="9 16 33 34">
    <location>
        <position position="473"/>
    </location>
    <ligand>
        <name>Zn(2+)</name>
        <dbReference type="ChEBI" id="CHEBI:29105"/>
        <label>1</label>
    </ligand>
</feature>
<feature type="binding site" evidence="2">
    <location>
        <position position="474"/>
    </location>
    <ligand>
        <name>AMP</name>
        <dbReference type="ChEBI" id="CHEBI:456215"/>
    </ligand>
</feature>
<feature type="binding site" evidence="9 16 33 34">
    <location>
        <position position="474"/>
    </location>
    <ligand>
        <name>Mg(2+)</name>
        <dbReference type="ChEBI" id="CHEBI:18420"/>
    </ligand>
</feature>
<feature type="binding site" evidence="2">
    <location>
        <position position="474"/>
    </location>
    <ligand>
        <name>Mn(2+)</name>
        <dbReference type="ChEBI" id="CHEBI:29035"/>
    </ligand>
</feature>
<feature type="binding site" evidence="9 16 33 34">
    <location>
        <position position="474"/>
    </location>
    <ligand>
        <name>Zn(2+)</name>
        <dbReference type="ChEBI" id="CHEBI:29105"/>
        <label>1</label>
    </ligand>
</feature>
<feature type="binding site" evidence="2">
    <location>
        <position position="474"/>
    </location>
    <ligand>
        <name>Zn(2+)</name>
        <dbReference type="ChEBI" id="CHEBI:29105"/>
        <label>2</label>
    </ligand>
</feature>
<feature type="binding site" evidence="2">
    <location>
        <position position="591"/>
    </location>
    <ligand>
        <name>AMP</name>
        <dbReference type="ChEBI" id="CHEBI:456215"/>
    </ligand>
</feature>
<feature type="binding site" evidence="9 16 33 34">
    <location>
        <position position="591"/>
    </location>
    <ligand>
        <name>Zn(2+)</name>
        <dbReference type="ChEBI" id="CHEBI:29105"/>
        <label>1</label>
    </ligand>
</feature>
<feature type="binding site" evidence="3">
    <location>
        <position position="642"/>
    </location>
    <ligand>
        <name>3',5'-cyclic AMP</name>
        <dbReference type="ChEBI" id="CHEBI:58165"/>
    </ligand>
</feature>
<feature type="binding site" evidence="2">
    <location>
        <position position="642"/>
    </location>
    <ligand>
        <name>AMP</name>
        <dbReference type="ChEBI" id="CHEBI:456215"/>
    </ligand>
</feature>
<feature type="binding site" evidence="3">
    <location>
        <position position="645"/>
    </location>
    <ligand>
        <name>3',5'-cyclic AMP</name>
        <dbReference type="ChEBI" id="CHEBI:58165"/>
    </ligand>
</feature>
<feature type="binding site" evidence="2">
    <location>
        <position position="645"/>
    </location>
    <ligand>
        <name>AMP</name>
        <dbReference type="ChEBI" id="CHEBI:456215"/>
    </ligand>
</feature>
<feature type="site" description="Cleavage; by caspase-3" evidence="8">
    <location>
        <begin position="69"/>
        <end position="70"/>
    </location>
</feature>
<feature type="modified residue" description="Phosphoserine" evidence="36">
    <location>
        <position position="13"/>
    </location>
</feature>
<feature type="modified residue" description="Phosphoserine; by MAPKAPK2" evidence="1">
    <location>
        <position position="152"/>
    </location>
</feature>
<feature type="modified residue" description="Phosphoserine" evidence="1">
    <location>
        <position position="157"/>
    </location>
</feature>
<feature type="modified residue" description="Phosphoserine" evidence="35">
    <location>
        <position position="165"/>
    </location>
</feature>
<feature type="modified residue" description="Phosphoserine" evidence="36">
    <location>
        <position position="209"/>
    </location>
</feature>
<feature type="modified residue" description="Phosphoserine" evidence="36">
    <location>
        <position position="346"/>
    </location>
</feature>
<feature type="modified residue" description="Phosphoserine" evidence="26">
    <location>
        <position position="686"/>
    </location>
</feature>
<feature type="modified residue" description="Phosphoserine" evidence="26">
    <location>
        <position position="688"/>
    </location>
</feature>
<feature type="cross-link" description="Glycyl lysine isopeptide (Lys-Gly) (interchain with G-Cter in SUMO)" evidence="11">
    <location>
        <position position="358"/>
    </location>
</feature>
<feature type="splice variant" id="VSP_004559" description="In isoform 5." evidence="21 23">
    <original>MEPPTVPSERSLSLSLPGPREGQATLKPPPQHLWRQPRTPIRIQQRGYSDSAERAERERQPHRPIERADAMDTSDRPGLRTTRMSWPSSFHGTGTGSGGAGGGSSRRFEAENGPTPSPGRSPLDSQASPGLVLHAGAATSQRRESFLYRSDSDYDMSPKTMSRNSSVTSEAHAEDLIVTPFAQVLASLRSVRSNFSLLTNVPVPSNKRSPLGGPTPVCKATLSEETCQQLARETLEELDWCLEQLETMQTYRSVSEMASHKFKRMLNRELTHLSEMSRSGNQVSEYISTTFLDKQNEVEIPSPTMKEREKQQAPRPRPSQPPPPPVPHLQPMSQITGLKKLMHSNSLNNSNIPRFGVKTDQEELLAQ</original>
    <variation>MVLPSDQGFKLLGNVLQGPEPYRLLTSGLRLHQ</variation>
    <location>
        <begin position="1"/>
        <end position="367"/>
    </location>
</feature>
<feature type="splice variant" id="VSP_004558" description="In isoform 4." evidence="18 23">
    <original>MEPPTVPSERSLSLSLPGPREGQATLKPPPQHLWRQPRTPIRIQQRGYSDSAERAERERQPHRPIERADAMDTSDRPGLRTTRMSWPSSFHGTGTGSGGAGGGSSRRFEAENGPTPSPGRSPLDSQASPGLVLHAGAATSQRRESFLYRSDSDYDMSPKTMSRNSSVTSEAHAEDLIVTPFAQVLASLRSVRSNFSLLTNVPVPSNKRSPLGGPTPVCKATLSEETCQQLARETLEELDWCLEQLETMQTYRSVSEMASHK</original>
    <variation>MPLVDFFCETCSKPWLVGWWDQ</variation>
    <location>
        <begin position="1"/>
        <end position="261"/>
    </location>
</feature>
<feature type="splice variant" id="VSP_004557" description="In isoform 3." evidence="21 22 23">
    <original>MEPPTVPSERSLSLSLPGPREGQATLKPPPQHLWRQPRTPIRIQQRGYSDSAERAERERQPHRPIERADAMDTSDRPGLRTTRMSWPSSFHGTGTGSGGAGGGSSRRFEAENGPTPSPGRSPLDSQASPGLVLHAGAATSQRRESFLYRSDSDYDMSPKTMSRNSSVTSEAHAEDLIVTPFAQVLASLRSVRSNFSLLTNVPVPSNKRS</original>
    <variation>MCPFPVTTV</variation>
    <location>
        <begin position="1"/>
        <end position="209"/>
    </location>
</feature>
<feature type="splice variant" id="VSP_004556" description="In isoform 2." evidence="19 23">
    <original>MEPPTVPSERSLSLSLPGPREGQATLKPPPQHLWRQPRTPIRIQQRGYSDSAERAERERQPHRPIERADAMDTSDRPGLRTTRMSWPSSFHGTGTGSGGAGGGSSRR</original>
    <variation>MARPRGLGRIPELQLVAFPVAVAAEDEAFLPEPLAPRAPRRPRSPPSSPVFFASPSPTFRRRLRLLRSCQDLGRQAWAGAG</variation>
    <location>
        <begin position="1"/>
        <end position="107"/>
    </location>
</feature>
<feature type="splice variant" id="VSP_038185" description="In isoform 6." evidence="17">
    <original>MEPPTVPSERSLSLSLPGPREGQATLKPPPQHLWRQPRTPIRIQQRGYSDSAERAERERQPHRPIERADAMDTSDRPGLRTTRMSWPSSFHGTGTGSGGAGGGSSRR</original>
    <variation>MRSGAAPRARPRPPALALPPTGPESLTHFPFSDEDTRRHPPGRSVS</variation>
    <location>
        <begin position="1"/>
        <end position="107"/>
    </location>
</feature>
<feature type="splice variant" id="VSP_038186" description="In isoform 7." evidence="20">
    <original>MEPPTVPSERSLSLSLPGPREGQATLKPPPQHLWRQPRTPIRIQQRGYSDSAERAERERQPHRPIERADAMDTSDRPGLRTTRMSWPSSFHGTGTGSGGAGGGSSRR</original>
    <variation>MKRSRSALSVAGTGDERSRETPESDRANMLGADLRRPRRRLSSGPGLGWAQPEPSDPGVPLPPRPTTLPLLIPPRISITRAENDS</variation>
    <location>
        <begin position="1"/>
        <end position="107"/>
    </location>
</feature>
<feature type="splice variant" id="VSP_004560" description="In isoform 5." evidence="21 23">
    <original>GFIDYIVHPLWETW</original>
    <variation>QARGIDGRAQGGFY</variation>
    <location>
        <begin position="644"/>
        <end position="657"/>
    </location>
</feature>
<feature type="splice variant" id="VSP_004561" description="In isoform 5." evidence="21 23">
    <location>
        <begin position="658"/>
        <end position="886"/>
    </location>
</feature>
<feature type="sequence variant" id="VAR_059544" description="In dbSNP:rs1051738." evidence="12 13">
    <original>A</original>
    <variation>E</variation>
    <location>
        <position position="736"/>
    </location>
</feature>
<feature type="sequence variant" id="VAR_059545" description="In dbSNP:rs2230190.">
    <original>H</original>
    <variation>Y</variation>
    <location>
        <position position="808"/>
    </location>
</feature>
<feature type="helix" evidence="37">
    <location>
        <begin position="362"/>
        <end position="368"/>
    </location>
</feature>
<feature type="helix" evidence="37">
    <location>
        <begin position="369"/>
        <end position="371"/>
    </location>
</feature>
<feature type="helix" evidence="37">
    <location>
        <begin position="379"/>
        <end position="385"/>
    </location>
</feature>
<feature type="turn" evidence="37">
    <location>
        <begin position="386"/>
        <end position="388"/>
    </location>
</feature>
<feature type="helix" evidence="37">
    <location>
        <begin position="390"/>
        <end position="401"/>
    </location>
</feature>
<feature type="helix" evidence="37">
    <location>
        <begin position="404"/>
        <end position="407"/>
    </location>
</feature>
<feature type="helix" evidence="37">
    <location>
        <begin position="412"/>
        <end position="424"/>
    </location>
</feature>
<feature type="strand" evidence="37">
    <location>
        <begin position="430"/>
        <end position="434"/>
    </location>
</feature>
<feature type="helix" evidence="37">
    <location>
        <begin position="435"/>
        <end position="449"/>
    </location>
</feature>
<feature type="helix" evidence="37">
    <location>
        <begin position="452"/>
        <end position="454"/>
    </location>
</feature>
<feature type="turn" evidence="37">
    <location>
        <begin position="455"/>
        <end position="457"/>
    </location>
</feature>
<feature type="helix" evidence="37">
    <location>
        <begin position="460"/>
        <end position="472"/>
    </location>
</feature>
<feature type="turn" evidence="37">
    <location>
        <begin position="473"/>
        <end position="476"/>
    </location>
</feature>
<feature type="helix" evidence="37">
    <location>
        <begin position="482"/>
        <end position="487"/>
    </location>
</feature>
<feature type="helix" evidence="37">
    <location>
        <begin position="491"/>
        <end position="495"/>
    </location>
</feature>
<feature type="turn" evidence="37">
    <location>
        <begin position="496"/>
        <end position="498"/>
    </location>
</feature>
<feature type="helix" evidence="37">
    <location>
        <begin position="501"/>
        <end position="512"/>
    </location>
</feature>
<feature type="helix" evidence="37">
    <location>
        <begin position="513"/>
        <end position="515"/>
    </location>
</feature>
<feature type="turn" evidence="37">
    <location>
        <begin position="521"/>
        <end position="524"/>
    </location>
</feature>
<feature type="helix" evidence="37">
    <location>
        <begin position="527"/>
        <end position="542"/>
    </location>
</feature>
<feature type="helix" evidence="37">
    <location>
        <begin position="546"/>
        <end position="548"/>
    </location>
</feature>
<feature type="helix" evidence="37">
    <location>
        <begin position="549"/>
        <end position="561"/>
    </location>
</feature>
<feature type="strand" evidence="37">
    <location>
        <begin position="567"/>
        <end position="569"/>
    </location>
</feature>
<feature type="helix" evidence="37">
    <location>
        <begin position="576"/>
        <end position="591"/>
    </location>
</feature>
<feature type="helix" evidence="37">
    <location>
        <begin position="594"/>
        <end position="596"/>
    </location>
</feature>
<feature type="helix" evidence="37">
    <location>
        <begin position="599"/>
        <end position="622"/>
    </location>
</feature>
<feature type="turn" evidence="37">
    <location>
        <begin position="633"/>
        <end position="635"/>
    </location>
</feature>
<feature type="helix" evidence="37">
    <location>
        <begin position="638"/>
        <end position="648"/>
    </location>
</feature>
<feature type="helix" evidence="37">
    <location>
        <begin position="650"/>
        <end position="660"/>
    </location>
</feature>
<feature type="turn" evidence="37">
    <location>
        <begin position="661"/>
        <end position="665"/>
    </location>
</feature>
<feature type="helix" evidence="37">
    <location>
        <begin position="666"/>
        <end position="682"/>
    </location>
</feature>
<feature type="modified residue" description="Phosphoserine" evidence="7">
    <location sequence="P27815-2">
        <position position="119"/>
    </location>
</feature>
<feature type="modified residue" description="Phosphoserine" evidence="7">
    <location sequence="P27815-7">
        <position position="123"/>
    </location>
</feature>
<keyword id="KW-0002">3D-structure</keyword>
<keyword id="KW-0025">Alternative splicing</keyword>
<keyword id="KW-0114">cAMP</keyword>
<keyword id="KW-1003">Cell membrane</keyword>
<keyword id="KW-0966">Cell projection</keyword>
<keyword id="KW-0963">Cytoplasm</keyword>
<keyword id="KW-0378">Hydrolase</keyword>
<keyword id="KW-1017">Isopeptide bond</keyword>
<keyword id="KW-0464">Manganese</keyword>
<keyword id="KW-0472">Membrane</keyword>
<keyword id="KW-0479">Metal-binding</keyword>
<keyword id="KW-0597">Phosphoprotein</keyword>
<keyword id="KW-1267">Proteomics identification</keyword>
<keyword id="KW-1185">Reference proteome</keyword>
<keyword id="KW-0832">Ubl conjugation</keyword>
<keyword id="KW-0862">Zinc</keyword>
<accession>P27815</accession>
<accession>O75522</accession>
<accession>O76092</accession>
<accession>Q16255</accession>
<accession>Q16691</accession>
<accession>Q5DM53</accession>
<accession>Q6PMT2</accession>
<accession>Q8IVA7</accession>
<accession>Q8WUQ3</accession>
<accession>Q9H3H2</accession>
<name>PDE4A_HUMAN</name>
<proteinExistence type="evidence at protein level"/>
<comment type="function">
    <text evidence="7 12">Hydrolyzes the second messenger 3',5'-cyclic AMP (cAMP), which is a key regulator of many important physiological processes.</text>
</comment>
<comment type="function">
    <molecule>Isoform 1</molecule>
    <text evidence="6 8">Efficiently hydrolyzes cAMP.</text>
</comment>
<comment type="function">
    <molecule>Isoform 2</molecule>
    <text evidence="8">Efficiently hydrolyzes cAMP.</text>
</comment>
<comment type="function">
    <molecule>Isoform 3</molecule>
    <text evidence="14">Efficiently hydrolyzes cAMP. The phosphodiesterase activity is not affected by calcium, calmodulin or cyclic GMP (cGMP) levels. Does not hydrolyze cGMP.</text>
</comment>
<comment type="function">
    <molecule>Isoform 4</molecule>
    <text evidence="15">Efficiently hydrolyzes cAMP.</text>
</comment>
<comment type="function">
    <molecule>Isoform 6</molecule>
    <text evidence="6 8 9">Efficiently hydrolyzes cAMP.</text>
</comment>
<comment type="function">
    <molecule>Isoform 7</molecule>
    <text evidence="10">Efficiently hydrolyzes cAMP.</text>
</comment>
<comment type="catalytic activity">
    <reaction evidence="7 12">
        <text>3',5'-cyclic AMP + H2O = AMP + H(+)</text>
        <dbReference type="Rhea" id="RHEA:25277"/>
        <dbReference type="ChEBI" id="CHEBI:15377"/>
        <dbReference type="ChEBI" id="CHEBI:15378"/>
        <dbReference type="ChEBI" id="CHEBI:58165"/>
        <dbReference type="ChEBI" id="CHEBI:456215"/>
        <dbReference type="EC" id="3.1.4.53"/>
    </reaction>
    <physiologicalReaction direction="left-to-right" evidence="26 30">
        <dbReference type="Rhea" id="RHEA:25278"/>
    </physiologicalReaction>
</comment>
<comment type="catalytic activity">
    <molecule>Isoform 1</molecule>
    <reaction evidence="6 8">
        <text>3',5'-cyclic AMP + H2O = AMP + H(+)</text>
        <dbReference type="Rhea" id="RHEA:25277"/>
        <dbReference type="ChEBI" id="CHEBI:15377"/>
        <dbReference type="ChEBI" id="CHEBI:15378"/>
        <dbReference type="ChEBI" id="CHEBI:58165"/>
        <dbReference type="ChEBI" id="CHEBI:456215"/>
        <dbReference type="EC" id="3.1.4.53"/>
    </reaction>
    <physiologicalReaction direction="left-to-right" evidence="25 27">
        <dbReference type="Rhea" id="RHEA:25278"/>
    </physiologicalReaction>
</comment>
<comment type="catalytic activity">
    <molecule>Isoform 2</molecule>
    <reaction evidence="8">
        <text>3',5'-cyclic AMP + H2O = AMP + H(+)</text>
        <dbReference type="Rhea" id="RHEA:25277"/>
        <dbReference type="ChEBI" id="CHEBI:15377"/>
        <dbReference type="ChEBI" id="CHEBI:15378"/>
        <dbReference type="ChEBI" id="CHEBI:58165"/>
        <dbReference type="ChEBI" id="CHEBI:456215"/>
        <dbReference type="EC" id="3.1.4.53"/>
    </reaction>
    <physiologicalReaction direction="left-to-right" evidence="27">
        <dbReference type="Rhea" id="RHEA:25278"/>
    </physiologicalReaction>
</comment>
<comment type="catalytic activity">
    <molecule>Isoform 3</molecule>
    <reaction evidence="14">
        <text>3',5'-cyclic AMP + H2O = AMP + H(+)</text>
        <dbReference type="Rhea" id="RHEA:25277"/>
        <dbReference type="ChEBI" id="CHEBI:15377"/>
        <dbReference type="ChEBI" id="CHEBI:15378"/>
        <dbReference type="ChEBI" id="CHEBI:58165"/>
        <dbReference type="ChEBI" id="CHEBI:456215"/>
        <dbReference type="EC" id="3.1.4.53"/>
    </reaction>
    <physiologicalReaction direction="left-to-right" evidence="31">
        <dbReference type="Rhea" id="RHEA:25278"/>
    </physiologicalReaction>
</comment>
<comment type="catalytic activity">
    <molecule>Isoform 4</molecule>
    <reaction evidence="15">
        <text>3',5'-cyclic AMP + H2O = AMP + H(+)</text>
        <dbReference type="Rhea" id="RHEA:25277"/>
        <dbReference type="ChEBI" id="CHEBI:15377"/>
        <dbReference type="ChEBI" id="CHEBI:15378"/>
        <dbReference type="ChEBI" id="CHEBI:58165"/>
        <dbReference type="ChEBI" id="CHEBI:456215"/>
        <dbReference type="EC" id="3.1.4.53"/>
    </reaction>
    <physiologicalReaction direction="left-to-right" evidence="32">
        <dbReference type="Rhea" id="RHEA:25278"/>
    </physiologicalReaction>
</comment>
<comment type="catalytic activity">
    <molecule>Isoform 6</molecule>
    <reaction evidence="6 8 9">
        <text>3',5'-cyclic AMP + H2O = AMP + H(+)</text>
        <dbReference type="Rhea" id="RHEA:25277"/>
        <dbReference type="ChEBI" id="CHEBI:15377"/>
        <dbReference type="ChEBI" id="CHEBI:15378"/>
        <dbReference type="ChEBI" id="CHEBI:58165"/>
        <dbReference type="ChEBI" id="CHEBI:456215"/>
        <dbReference type="EC" id="3.1.4.53"/>
    </reaction>
    <physiologicalReaction direction="left-to-right" evidence="25 27 28">
        <dbReference type="Rhea" id="RHEA:25278"/>
    </physiologicalReaction>
</comment>
<comment type="catalytic activity">
    <molecule>Isoform 7</molecule>
    <reaction evidence="10">
        <text>3',5'-cyclic AMP + H2O = AMP + H(+)</text>
        <dbReference type="Rhea" id="RHEA:25277"/>
        <dbReference type="ChEBI" id="CHEBI:15377"/>
        <dbReference type="ChEBI" id="CHEBI:15378"/>
        <dbReference type="ChEBI" id="CHEBI:58165"/>
        <dbReference type="ChEBI" id="CHEBI:456215"/>
        <dbReference type="EC" id="3.1.4.53"/>
    </reaction>
    <physiologicalReaction direction="left-to-right" evidence="29">
        <dbReference type="Rhea" id="RHEA:25278"/>
    </physiologicalReaction>
</comment>
<comment type="cofactor">
    <cofactor evidence="9 16">
        <name>Zn(2+)</name>
        <dbReference type="ChEBI" id="CHEBI:29105"/>
    </cofactor>
    <text evidence="9 16">Binds 2 divalent metal cations per subunit. Site 1 may preferentially bind zinc ions.</text>
</comment>
<comment type="cofactor">
    <cofactor evidence="9 16">
        <name>Mg(2+)</name>
        <dbReference type="ChEBI" id="CHEBI:18420"/>
    </cofactor>
    <cofactor evidence="2">
        <name>Mn(2+)</name>
        <dbReference type="ChEBI" id="CHEBI:29035"/>
    </cofactor>
    <text evidence="2 9 16">Binds 2 divalent metal cations per subunit (PubMed:17727341, Ref.20). Site 2 has a preference for magnesium and/or manganese ions (By similarity).</text>
</comment>
<comment type="activity regulation">
    <molecule>Isoform 1</molecule>
    <text evidence="8">Inhibited by rolipram, cilomilast, Ro 20-1724, roflumilast and denbufylline.</text>
</comment>
<comment type="activity regulation">
    <molecule>Isoform 2</molecule>
    <text evidence="8">Inhibited by rolipram, cilomilast, Ro 20-1724, roflumilast and denbufylline.</text>
</comment>
<comment type="activity regulation">
    <molecule>Isoform 3</molecule>
    <text evidence="14">Inhibited by rolipram.</text>
</comment>
<comment type="activity regulation">
    <molecule>Isoform 4</molecule>
    <text evidence="15">Inhibited by rolipram.</text>
</comment>
<comment type="activity regulation">
    <molecule>Isoform 6</molecule>
    <text evidence="6 8">Inhibited by rolipram, cilomilast, Ro 20-1724, roflumilast and denbufylline.</text>
</comment>
<comment type="activity regulation">
    <molecule>Isoform 7</molecule>
    <text evidence="10">Inhibited by rolipram and cilomilast.</text>
</comment>
<comment type="biophysicochemical properties">
    <kinetics>
        <KM evidence="7">2 uM for cAMP</KM>
        <Vmax evidence="7">8.8 umol/min/mg enzyme towards cAMP</Vmax>
    </kinetics>
</comment>
<comment type="biophysicochemical properties">
    <molecule>Isoform 2</molecule>
    <kinetics>
        <KM evidence="8">4.2 uM for cAMP</KM>
    </kinetics>
</comment>
<comment type="biophysicochemical properties">
    <molecule>Isoform 3</molecule>
    <kinetics>
        <KM evidence="14">6 uM for cAMP</KM>
    </kinetics>
</comment>
<comment type="biophysicochemical properties">
    <molecule>Isoform 6</molecule>
    <kinetics>
        <KM evidence="6">3 uM for cAMP</KM>
        <KM evidence="9">5.1 uM for cAMP</KM>
    </kinetics>
</comment>
<comment type="pathway">
    <text evidence="27">Purine metabolism; 3',5'-cyclic AMP degradation; AMP from 3',5'-cyclic AMP: step 1/1.</text>
</comment>
<comment type="subunit">
    <molecule>Isoform 1</molecule>
    <text evidence="6 8">Interacts with LYN (via SH3 domain). Interacts with ARRB2.</text>
</comment>
<comment type="subunit">
    <molecule>Isoform 2</molecule>
    <text evidence="8">Interacts with LYN (via SH3 domain). Interacts with ARRB2.</text>
</comment>
<comment type="subunit">
    <molecule>Isoform 6</molecule>
    <text evidence="6 8">Interacts with LYN (via SH3 domain). Interacts with ARRB2.</text>
</comment>
<comment type="interaction">
    <interactant intactId="EBI-12080840">
        <id>P27815-4</id>
    </interactant>
    <interactant intactId="EBI-718729">
        <id>P55212</id>
        <label>CASP6</label>
    </interactant>
    <organismsDiffer>false</organismsDiffer>
    <experiments>3</experiments>
</comment>
<comment type="interaction">
    <interactant intactId="EBI-12080840">
        <id>P27815-4</id>
    </interactant>
    <interactant intactId="EBI-717654">
        <id>O14569</id>
        <label>CYB561D2</label>
    </interactant>
    <organismsDiffer>false</organismsDiffer>
    <experiments>3</experiments>
</comment>
<comment type="interaction">
    <interactant intactId="EBI-12080840">
        <id>P27815-4</id>
    </interactant>
    <interactant intactId="EBI-21591415">
        <id>P13473-2</id>
        <label>LAMP2</label>
    </interactant>
    <organismsDiffer>false</organismsDiffer>
    <experiments>3</experiments>
</comment>
<comment type="interaction">
    <interactant intactId="EBI-12080840">
        <id>P27815-4</id>
    </interactant>
    <interactant intactId="EBI-9057006">
        <id>Q9UJX0</id>
        <label>OSGIN1</label>
    </interactant>
    <organismsDiffer>false</organismsDiffer>
    <experiments>3</experiments>
</comment>
<comment type="interaction">
    <interactant intactId="EBI-12080840">
        <id>P27815-4</id>
    </interactant>
    <interactant intactId="EBI-709807">
        <id>P16118</id>
        <label>PFKFB1</label>
    </interactant>
    <organismsDiffer>false</organismsDiffer>
    <experiments>3</experiments>
</comment>
<comment type="interaction">
    <interactant intactId="EBI-12080840">
        <id>P27815-4</id>
    </interactant>
    <interactant intactId="EBI-5280197">
        <id>O75400-2</id>
        <label>PRPF40A</label>
    </interactant>
    <organismsDiffer>false</organismsDiffer>
    <experiments>3</experiments>
</comment>
<comment type="interaction">
    <interactant intactId="EBI-12080840">
        <id>P27815-4</id>
    </interactant>
    <interactant intactId="EBI-2623095">
        <id>Q9Y371</id>
        <label>SH3GLB1</label>
    </interactant>
    <organismsDiffer>false</organismsDiffer>
    <experiments>3</experiments>
</comment>
<comment type="subcellular location">
    <molecule>Isoform 1</molecule>
    <subcellularLocation>
        <location evidence="8">Cytoplasm</location>
        <location evidence="8">Perinuclear region</location>
    </subcellularLocation>
</comment>
<comment type="subcellular location">
    <molecule>Isoform 2</molecule>
    <subcellularLocation>
        <location evidence="8">Cytoplasm</location>
        <location evidence="8">Perinuclear region</location>
    </subcellularLocation>
    <subcellularLocation>
        <location evidence="8">Cell projection</location>
        <location evidence="8">Ruffle membrane</location>
    </subcellularLocation>
</comment>
<comment type="subcellular location">
    <molecule>Isoform 3</molecule>
    <subcellularLocation>
        <location evidence="14">Cytoplasm</location>
        <location evidence="14">Cytosol</location>
    </subcellularLocation>
</comment>
<comment type="subcellular location">
    <molecule>Isoform 4</molecule>
    <subcellularLocation>
        <location>Membrane</location>
        <topology evidence="15">Peripheral membrane protein</topology>
    </subcellularLocation>
    <text evidence="15">Isoform 4 has propensity for association with membranes.</text>
</comment>
<comment type="subcellular location">
    <molecule>Isoform 6</molecule>
    <subcellularLocation>
        <location evidence="6 8">Cytoplasm</location>
        <location evidence="6 8">Perinuclear region</location>
    </subcellularLocation>
</comment>
<comment type="subcellular location">
    <molecule>Isoform 7</molecule>
    <subcellularLocation>
        <location>Cytoplasm</location>
        <location>Cytosol</location>
    </subcellularLocation>
    <subcellularLocation>
        <location>Membrane</location>
        <topology evidence="10">Peripheral membrane protein</topology>
    </subcellularLocation>
    <text evidence="10">Predominantly cytosolic.</text>
</comment>
<comment type="alternative products">
    <event type="alternative splicing"/>
    <isoform>
        <id>P27815-1</id>
        <name>1</name>
        <name evidence="17">PDE4A4</name>
        <name evidence="17">PDE4A4B</name>
        <name>PDE46</name>
        <sequence type="displayed"/>
    </isoform>
    <isoform>
        <id>P27815-2</id>
        <name>2</name>
        <name>TM3</name>
        <name evidence="19">PDE4A11</name>
        <sequence type="described" ref="VSP_004556"/>
    </isoform>
    <isoform>
        <id>P27815-3</id>
        <name>3</name>
        <name>PDE4A7</name>
        <name>PDE4A6</name>
        <sequence type="described" ref="VSP_004557"/>
    </isoform>
    <isoform>
        <id>P27815-4</id>
        <name>4</name>
        <name>PDE4A1</name>
        <name>RD1</name>
        <sequence type="described" ref="VSP_004558"/>
    </isoform>
    <isoform>
        <id>P27815-5</id>
        <name>5</name>
        <name>PDE4A8A</name>
        <name>2EL</name>
        <sequence type="described" ref="VSP_004559 VSP_004560 VSP_004561"/>
    </isoform>
    <isoform>
        <id>P27815-6</id>
        <name>6</name>
        <name evidence="17">PDE4A10</name>
        <sequence type="described" ref="VSP_038185"/>
    </isoform>
    <isoform>
        <id>P27815-7</id>
        <name>7</name>
        <name evidence="20">PDE4A8</name>
        <sequence type="described" ref="VSP_038186"/>
    </isoform>
    <text>Additional isoforms seem to exist.</text>
</comment>
<comment type="tissue specificity">
    <molecule>Isoform 1</molecule>
    <text evidence="8">Expressed in lymphoid cell subsets including CD8-positive T cells and T-helper 2 cells. Expressed in dendritic cells.</text>
</comment>
<comment type="tissue specificity">
    <molecule>Isoform 2</molecule>
    <text evidence="8">Highly expressed in liver, stomach, testis, thyroid and adrenal glands and at a lower extent in placenta, kidney, pancreas, ovary, uterus and skin. Expressed in myeloid cell subsets including dendritic cells, monocytes, macrophages, eosinophils and mast cells. Expressed in natural killer cells. Expressed in bronchial smooth muscle.</text>
</comment>
<comment type="tissue specificity">
    <molecule>Isoform 6</molecule>
    <text evidence="6">Expressed at high levels in the heart and small intestine. It is also found in the brain, kidney, spleen, colon, salivary gland, ovary and peripheral blood lymphocytes.</text>
</comment>
<comment type="tissue specificity">
    <molecule>Isoform 7</molecule>
    <text evidence="10">Expressed predominantly in skeletal muscle and brain and at lower levels in the testis. Found in specific neuronal subpopulations including cortical pyramidal neurons, horn neurons in the spinal cord and Purkinje cells in cerebellum (at protein level).</text>
</comment>
<comment type="developmental stage">
    <molecule>Isoform 2</molecule>
    <text evidence="8">Expressed in fetal brain.</text>
</comment>
<comment type="PTM">
    <molecule>Isoform 1</molecule>
    <text evidence="8">Proteolytically cleaved by CASP3.</text>
</comment>
<comment type="PTM">
    <molecule>Isoform 2</molecule>
    <text evidence="8">Phosphorylated at Ser-119 by PKA.</text>
</comment>
<comment type="miscellaneous">
    <molecule>Isoform 5</molecule>
    <text evidence="24">May be produced at very low levels due to a premature stop codon in the mRNA, leading to nonsense-mediated mRNA decay. Probably represents a non-functional splice isoform.</text>
</comment>
<comment type="similarity">
    <text evidence="24">Belongs to the cyclic nucleotide phosphodiesterase family. PDE4 subfamily.</text>
</comment>
<evidence type="ECO:0000250" key="1">
    <source>
        <dbReference type="UniProtKB" id="P54748"/>
    </source>
</evidence>
<evidence type="ECO:0000250" key="2">
    <source>
        <dbReference type="UniProtKB" id="Q07343"/>
    </source>
</evidence>
<evidence type="ECO:0000250" key="3">
    <source>
        <dbReference type="UniProtKB" id="Q08499"/>
    </source>
</evidence>
<evidence type="ECO:0000255" key="4">
    <source>
        <dbReference type="PROSITE-ProRule" id="PRU01192"/>
    </source>
</evidence>
<evidence type="ECO:0000256" key="5">
    <source>
        <dbReference type="SAM" id="MobiDB-lite"/>
    </source>
</evidence>
<evidence type="ECO:0000269" key="6">
    <source>
    </source>
</evidence>
<evidence type="ECO:0000269" key="7">
    <source>
    </source>
</evidence>
<evidence type="ECO:0000269" key="8">
    <source>
    </source>
</evidence>
<evidence type="ECO:0000269" key="9">
    <source>
    </source>
</evidence>
<evidence type="ECO:0000269" key="10">
    <source>
    </source>
</evidence>
<evidence type="ECO:0000269" key="11">
    <source>
    </source>
</evidence>
<evidence type="ECO:0000269" key="12">
    <source>
    </source>
</evidence>
<evidence type="ECO:0000269" key="13">
    <source>
    </source>
</evidence>
<evidence type="ECO:0000269" key="14">
    <source>
    </source>
</evidence>
<evidence type="ECO:0000269" key="15">
    <source>
    </source>
</evidence>
<evidence type="ECO:0000269" key="16">
    <source ref="20"/>
</evidence>
<evidence type="ECO:0000303" key="17">
    <source>
    </source>
</evidence>
<evidence type="ECO:0000303" key="18">
    <source>
    </source>
</evidence>
<evidence type="ECO:0000303" key="19">
    <source>
    </source>
</evidence>
<evidence type="ECO:0000303" key="20">
    <source>
    </source>
</evidence>
<evidence type="ECO:0000303" key="21">
    <source>
    </source>
</evidence>
<evidence type="ECO:0000303" key="22">
    <source>
    </source>
</evidence>
<evidence type="ECO:0000303" key="23">
    <source>
    </source>
</evidence>
<evidence type="ECO:0000305" key="24"/>
<evidence type="ECO:0000305" key="25">
    <source>
    </source>
</evidence>
<evidence type="ECO:0000305" key="26">
    <source>
    </source>
</evidence>
<evidence type="ECO:0000305" key="27">
    <source>
    </source>
</evidence>
<evidence type="ECO:0000305" key="28">
    <source>
    </source>
</evidence>
<evidence type="ECO:0000305" key="29">
    <source>
    </source>
</evidence>
<evidence type="ECO:0000305" key="30">
    <source>
    </source>
</evidence>
<evidence type="ECO:0000305" key="31">
    <source>
    </source>
</evidence>
<evidence type="ECO:0000305" key="32">
    <source>
    </source>
</evidence>
<evidence type="ECO:0007744" key="33">
    <source>
        <dbReference type="PDB" id="2QYK"/>
    </source>
</evidence>
<evidence type="ECO:0007744" key="34">
    <source>
        <dbReference type="PDB" id="3I8V"/>
    </source>
</evidence>
<evidence type="ECO:0007744" key="35">
    <source>
    </source>
</evidence>
<evidence type="ECO:0007744" key="36">
    <source>
    </source>
</evidence>
<evidence type="ECO:0007829" key="37">
    <source>
        <dbReference type="PDB" id="2QYK"/>
    </source>
</evidence>
<dbReference type="EC" id="3.1.4.53" evidence="7 8 10 14 15"/>
<dbReference type="EMBL" id="L20965">
    <property type="protein sequence ID" value="AAA03588.1"/>
    <property type="molecule type" value="mRNA"/>
</dbReference>
<dbReference type="EMBL" id="S75213">
    <property type="protein sequence ID" value="AAB33798.1"/>
    <property type="molecule type" value="mRNA"/>
</dbReference>
<dbReference type="EMBL" id="U18087">
    <property type="protein sequence ID" value="AAC50458.1"/>
    <property type="molecule type" value="mRNA"/>
</dbReference>
<dbReference type="EMBL" id="U18088">
    <property type="protein sequence ID" value="AAA98540.1"/>
    <property type="molecule type" value="mRNA"/>
</dbReference>
<dbReference type="EMBL" id="AF069491">
    <property type="protein sequence ID" value="AAC35012.1"/>
    <property type="molecule type" value="Genomic_DNA"/>
</dbReference>
<dbReference type="EMBL" id="AF069487">
    <property type="protein sequence ID" value="AAC35012.1"/>
    <property type="status" value="JOINED"/>
    <property type="molecule type" value="Genomic_DNA"/>
</dbReference>
<dbReference type="EMBL" id="AF069489">
    <property type="protein sequence ID" value="AAC35012.1"/>
    <property type="status" value="JOINED"/>
    <property type="molecule type" value="Genomic_DNA"/>
</dbReference>
<dbReference type="EMBL" id="AF069490">
    <property type="protein sequence ID" value="AAC35012.1"/>
    <property type="status" value="JOINED"/>
    <property type="molecule type" value="Genomic_DNA"/>
</dbReference>
<dbReference type="EMBL" id="AF069491">
    <property type="protein sequence ID" value="AAC35013.1"/>
    <property type="molecule type" value="Genomic_DNA"/>
</dbReference>
<dbReference type="EMBL" id="AF069489">
    <property type="protein sequence ID" value="AAC35013.1"/>
    <property type="status" value="JOINED"/>
    <property type="molecule type" value="Genomic_DNA"/>
</dbReference>
<dbReference type="EMBL" id="AF069490">
    <property type="protein sequence ID" value="AAC35013.1"/>
    <property type="status" value="JOINED"/>
    <property type="molecule type" value="Genomic_DNA"/>
</dbReference>
<dbReference type="EMBL" id="AF069491">
    <property type="protein sequence ID" value="AAC35014.1"/>
    <property type="molecule type" value="Genomic_DNA"/>
</dbReference>
<dbReference type="EMBL" id="AF069489">
    <property type="protein sequence ID" value="AAC35014.1"/>
    <property type="status" value="JOINED"/>
    <property type="molecule type" value="Genomic_DNA"/>
</dbReference>
<dbReference type="EMBL" id="AF069490">
    <property type="protein sequence ID" value="AAC35014.1"/>
    <property type="status" value="JOINED"/>
    <property type="molecule type" value="Genomic_DNA"/>
</dbReference>
<dbReference type="EMBL" id="AF069491">
    <property type="protein sequence ID" value="AAC35015.1"/>
    <property type="molecule type" value="Genomic_DNA"/>
</dbReference>
<dbReference type="EMBL" id="AF069488">
    <property type="protein sequence ID" value="AAC35015.1"/>
    <property type="status" value="JOINED"/>
    <property type="molecule type" value="Genomic_DNA"/>
</dbReference>
<dbReference type="EMBL" id="AF069489">
    <property type="protein sequence ID" value="AAC35015.1"/>
    <property type="status" value="JOINED"/>
    <property type="molecule type" value="Genomic_DNA"/>
</dbReference>
<dbReference type="EMBL" id="AF069490">
    <property type="protein sequence ID" value="AAC35015.1"/>
    <property type="status" value="JOINED"/>
    <property type="molecule type" value="Genomic_DNA"/>
</dbReference>
<dbReference type="EMBL" id="U68532">
    <property type="protein sequence ID" value="AAC63832.1"/>
    <property type="molecule type" value="mRNA"/>
</dbReference>
<dbReference type="EMBL" id="U97584">
    <property type="protein sequence ID" value="AAC25679.1"/>
    <property type="molecule type" value="mRNA"/>
</dbReference>
<dbReference type="EMBL" id="AF073745">
    <property type="protein sequence ID" value="AAD34217.2"/>
    <property type="molecule type" value="mRNA"/>
</dbReference>
<dbReference type="EMBL" id="AY618547">
    <property type="protein sequence ID" value="AAU82096.1"/>
    <property type="molecule type" value="mRNA"/>
</dbReference>
<dbReference type="EMBL" id="AY593872">
    <property type="protein sequence ID" value="AAT00628.1"/>
    <property type="molecule type" value="mRNA"/>
</dbReference>
<dbReference type="EMBL" id="AC011548">
    <property type="status" value="NOT_ANNOTATED_CDS"/>
    <property type="molecule type" value="Genomic_DNA"/>
</dbReference>
<dbReference type="EMBL" id="AC011529">
    <property type="status" value="NOT_ANNOTATED_CDS"/>
    <property type="molecule type" value="Genomic_DNA"/>
</dbReference>
<dbReference type="EMBL" id="AC011461">
    <property type="status" value="NOT_ANNOTATED_CDS"/>
    <property type="molecule type" value="Genomic_DNA"/>
</dbReference>
<dbReference type="EMBL" id="CH471106">
    <property type="protein sequence ID" value="EAW84104.1"/>
    <property type="molecule type" value="Genomic_DNA"/>
</dbReference>
<dbReference type="EMBL" id="CH471106">
    <property type="protein sequence ID" value="EAW84105.1"/>
    <property type="molecule type" value="Genomic_DNA"/>
</dbReference>
<dbReference type="EMBL" id="CH471106">
    <property type="protein sequence ID" value="EAW84108.1"/>
    <property type="molecule type" value="Genomic_DNA"/>
</dbReference>
<dbReference type="EMBL" id="BC019864">
    <property type="protein sequence ID" value="AAH19864.1"/>
    <property type="molecule type" value="mRNA"/>
</dbReference>
<dbReference type="EMBL" id="BC038234">
    <property type="protein sequence ID" value="AAH38234.1"/>
    <property type="molecule type" value="mRNA"/>
</dbReference>
<dbReference type="EMBL" id="M37744">
    <property type="protein sequence ID" value="AAA69697.1"/>
    <property type="molecule type" value="mRNA"/>
</dbReference>
<dbReference type="CCDS" id="CCDS12238.1">
    <molecule id="P27815-4"/>
</dbReference>
<dbReference type="CCDS" id="CCDS45961.1">
    <molecule id="P27815-1"/>
</dbReference>
<dbReference type="CCDS" id="CCDS45962.1">
    <molecule id="P27815-2"/>
</dbReference>
<dbReference type="CCDS" id="CCDS45963.1">
    <molecule id="P27815-6"/>
</dbReference>
<dbReference type="CCDS" id="CCDS58649.1">
    <molecule id="P27815-7"/>
</dbReference>
<dbReference type="PIR" id="A54442">
    <property type="entry name" value="A54442"/>
</dbReference>
<dbReference type="PIR" id="S55348">
    <property type="entry name" value="S55348"/>
</dbReference>
<dbReference type="RefSeq" id="NP_001104777.1">
    <molecule id="P27815-1"/>
    <property type="nucleotide sequence ID" value="NM_001111307.2"/>
</dbReference>
<dbReference type="RefSeq" id="NP_001104778.1">
    <molecule id="P27815-2"/>
    <property type="nucleotide sequence ID" value="NM_001111308.1"/>
</dbReference>
<dbReference type="RefSeq" id="NP_001104779.1">
    <molecule id="P27815-6"/>
    <property type="nucleotide sequence ID" value="NM_001111309.1"/>
</dbReference>
<dbReference type="RefSeq" id="NP_001230050.1">
    <molecule id="P27815-7"/>
    <property type="nucleotide sequence ID" value="NM_001243121.2"/>
</dbReference>
<dbReference type="RefSeq" id="NP_006193.1">
    <molecule id="P27815-4"/>
    <property type="nucleotide sequence ID" value="NM_006202.3"/>
</dbReference>
<dbReference type="RefSeq" id="XP_011526356.1">
    <property type="nucleotide sequence ID" value="XM_011528054.1"/>
</dbReference>
<dbReference type="PDB" id="2QYK">
    <property type="method" value="X-ray"/>
    <property type="resolution" value="2.10 A"/>
    <property type="chains" value="A/B=351-683"/>
</dbReference>
<dbReference type="PDB" id="3I8V">
    <property type="method" value="X-ray"/>
    <property type="resolution" value="2.25 A"/>
    <property type="chains" value="A/B=351-683"/>
</dbReference>
<dbReference type="PDB" id="3TVX">
    <property type="method" value="X-ray"/>
    <property type="resolution" value="2.84 A"/>
    <property type="chains" value="A/B=351-683"/>
</dbReference>
<dbReference type="PDBsum" id="2QYK"/>
<dbReference type="PDBsum" id="3I8V"/>
<dbReference type="PDBsum" id="3TVX"/>
<dbReference type="SMR" id="P27815"/>
<dbReference type="BioGRID" id="111167">
    <property type="interactions" value="26"/>
</dbReference>
<dbReference type="CORUM" id="P27815"/>
<dbReference type="FunCoup" id="P27815">
    <property type="interactions" value="1513"/>
</dbReference>
<dbReference type="IntAct" id="P27815">
    <property type="interactions" value="20"/>
</dbReference>
<dbReference type="MINT" id="P27815"/>
<dbReference type="STRING" id="9606.ENSP00000370078"/>
<dbReference type="BindingDB" id="P27815"/>
<dbReference type="ChEMBL" id="CHEMBL254"/>
<dbReference type="DrugBank" id="DB06842">
    <property type="generic name" value="(4R)-4-(3-butoxy-4-methoxybenzyl)imidazolidin-2-one"/>
</dbReference>
<dbReference type="DrugBank" id="DB04149">
    <property type="generic name" value="(R)-Rolipram"/>
</dbReference>
<dbReference type="DrugBank" id="DB03606">
    <property type="generic name" value="(S)-Rolipram"/>
</dbReference>
<dbReference type="DrugBank" id="DB07954">
    <property type="generic name" value="3-isobutyl-1-methyl-7H-xanthine"/>
</dbReference>
<dbReference type="DrugBank" id="DB08299">
    <property type="generic name" value="4-[8-(3-nitrophenyl)-1,7-naphthyridin-6-yl]benzoic acid"/>
</dbReference>
<dbReference type="DrugBank" id="DB01427">
    <property type="generic name" value="Amrinone"/>
</dbReference>
<dbReference type="DrugBank" id="DB16039">
    <property type="generic name" value="AN2898"/>
</dbReference>
<dbReference type="DrugBank" id="DB00201">
    <property type="generic name" value="Caffeine"/>
</dbReference>
<dbReference type="DrugBank" id="DB15640">
    <property type="generic name" value="CDC-801"/>
</dbReference>
<dbReference type="DrugBank" id="DB03849">
    <property type="generic name" value="Cilomilast"/>
</dbReference>
<dbReference type="DrugBank" id="DB05219">
    <property type="generic name" value="Crisaborole"/>
</dbReference>
<dbReference type="DrugBank" id="DB01647">
    <property type="generic name" value="Daxalipram"/>
</dbReference>
<dbReference type="DrugBank" id="DB00975">
    <property type="generic name" value="Dipyridamole"/>
</dbReference>
<dbReference type="DrugBank" id="DB06751">
    <property type="generic name" value="Drotaverine"/>
</dbReference>
<dbReference type="DrugBank" id="DB00651">
    <property type="generic name" value="Dyphylline"/>
</dbReference>
<dbReference type="DrugBank" id="DB00824">
    <property type="generic name" value="Enprofylline"/>
</dbReference>
<dbReference type="DrugBank" id="DB16157">
    <property type="generic name" value="Ensifentrine"/>
</dbReference>
<dbReference type="DrugBank" id="DB12137">
    <property type="generic name" value="GSK-256066"/>
</dbReference>
<dbReference type="DrugBank" id="DB12542">
    <property type="generic name" value="GSK-356278"/>
</dbReference>
<dbReference type="DrugBank" id="DB11650">
    <property type="generic name" value="HT-0712"/>
</dbReference>
<dbReference type="DrugBank" id="DB05266">
    <property type="generic name" value="Ibudilast"/>
</dbReference>
<dbReference type="DrugBank" id="DB01088">
    <property type="generic name" value="Iloprost"/>
</dbReference>
<dbReference type="DrugBank" id="DB13029">
    <property type="generic name" value="MK-0873"/>
</dbReference>
<dbReference type="DrugBank" id="DB12375">
    <property type="generic name" value="Oglemilast"/>
</dbReference>
<dbReference type="DrugBank" id="DB01303">
    <property type="generic name" value="Oxtriphylline"/>
</dbReference>
<dbReference type="DrugBank" id="DB01791">
    <property type="generic name" value="Piclamilast"/>
</dbReference>
<dbReference type="DrugBank" id="DB06479">
    <property type="generic name" value="Propentofylline"/>
</dbReference>
<dbReference type="DrugBank" id="DB11838">
    <property type="generic name" value="Revamilast"/>
</dbReference>
<dbReference type="DrugBank" id="DB01656">
    <property type="generic name" value="Roflumilast"/>
</dbReference>
<dbReference type="DrugBank" id="DB01954">
    <property type="generic name" value="Rolipram"/>
</dbReference>
<dbReference type="DrugBank" id="DB00277">
    <property type="generic name" value="Theophylline"/>
</dbReference>
<dbReference type="DrugBank" id="DB11681">
    <property type="generic name" value="Tofimilast"/>
</dbReference>
<dbReference type="DrugBank" id="DB08811">
    <property type="generic name" value="Tofisopam"/>
</dbReference>
<dbReference type="DrugBank" id="DB09283">
    <property type="generic name" value="Trapidil"/>
</dbReference>
<dbReference type="DrugCentral" id="P27815"/>
<dbReference type="GuidetoPHARMACOLOGY" id="1300"/>
<dbReference type="GlyGen" id="P27815">
    <property type="glycosylation" value="2 sites"/>
</dbReference>
<dbReference type="iPTMnet" id="P27815"/>
<dbReference type="PhosphoSitePlus" id="P27815"/>
<dbReference type="BioMuta" id="PDE4A"/>
<dbReference type="DMDM" id="116242706"/>
<dbReference type="jPOST" id="P27815"/>
<dbReference type="MassIVE" id="P27815"/>
<dbReference type="PaxDb" id="9606-ENSP00000370078"/>
<dbReference type="PeptideAtlas" id="P27815"/>
<dbReference type="ProteomicsDB" id="54411">
    <molecule id="P27815-1"/>
</dbReference>
<dbReference type="ProteomicsDB" id="54412">
    <molecule id="P27815-2"/>
</dbReference>
<dbReference type="ProteomicsDB" id="54413">
    <molecule id="P27815-3"/>
</dbReference>
<dbReference type="ProteomicsDB" id="54414">
    <molecule id="P27815-4"/>
</dbReference>
<dbReference type="ProteomicsDB" id="54415">
    <molecule id="P27815-5"/>
</dbReference>
<dbReference type="ProteomicsDB" id="54416">
    <molecule id="P27815-6"/>
</dbReference>
<dbReference type="ProteomicsDB" id="54417">
    <molecule id="P27815-7"/>
</dbReference>
<dbReference type="Antibodypedia" id="4321">
    <property type="antibodies" value="550 antibodies from 27 providers"/>
</dbReference>
<dbReference type="DNASU" id="5141"/>
<dbReference type="Ensembl" id="ENST00000293683.9">
    <molecule id="P27815-2"/>
    <property type="protein sequence ID" value="ENSP00000293683.4"/>
    <property type="gene ID" value="ENSG00000065989.16"/>
</dbReference>
<dbReference type="Ensembl" id="ENST00000344979.7">
    <molecule id="P27815-4"/>
    <property type="protein sequence ID" value="ENSP00000341007.2"/>
    <property type="gene ID" value="ENSG00000065989.16"/>
</dbReference>
<dbReference type="Ensembl" id="ENST00000380702.7">
    <molecule id="P27815-1"/>
    <property type="protein sequence ID" value="ENSP00000370078.3"/>
    <property type="gene ID" value="ENSG00000065989.16"/>
</dbReference>
<dbReference type="Ensembl" id="ENST00000440014.6">
    <molecule id="P27815-6"/>
    <property type="protein sequence ID" value="ENSP00000394754.1"/>
    <property type="gene ID" value="ENSG00000065989.16"/>
</dbReference>
<dbReference type="Ensembl" id="ENST00000592685.5">
    <molecule id="P27815-7"/>
    <property type="protein sequence ID" value="ENSP00000468507.1"/>
    <property type="gene ID" value="ENSG00000065989.16"/>
</dbReference>
<dbReference type="GeneID" id="5141"/>
<dbReference type="KEGG" id="hsa:5141"/>
<dbReference type="MANE-Select" id="ENST00000380702.7">
    <property type="protein sequence ID" value="ENSP00000370078.3"/>
    <property type="RefSeq nucleotide sequence ID" value="NM_001111307.2"/>
    <property type="RefSeq protein sequence ID" value="NP_001104777.1"/>
</dbReference>
<dbReference type="UCSC" id="uc002moj.3">
    <molecule id="P27815-1"/>
    <property type="organism name" value="human"/>
</dbReference>
<dbReference type="AGR" id="HGNC:8780"/>
<dbReference type="CTD" id="5141"/>
<dbReference type="DisGeNET" id="5141"/>
<dbReference type="GeneCards" id="PDE4A"/>
<dbReference type="HGNC" id="HGNC:8780">
    <property type="gene designation" value="PDE4A"/>
</dbReference>
<dbReference type="HPA" id="ENSG00000065989">
    <property type="expression patterns" value="Low tissue specificity"/>
</dbReference>
<dbReference type="MIM" id="600126">
    <property type="type" value="gene"/>
</dbReference>
<dbReference type="neXtProt" id="NX_P27815"/>
<dbReference type="OpenTargets" id="ENSG00000065989"/>
<dbReference type="PharmGKB" id="PA33128"/>
<dbReference type="VEuPathDB" id="HostDB:ENSG00000065989"/>
<dbReference type="eggNOG" id="KOG3689">
    <property type="taxonomic scope" value="Eukaryota"/>
</dbReference>
<dbReference type="GeneTree" id="ENSGT00940000159788"/>
<dbReference type="HOGENOM" id="CLU_005940_5_0_1"/>
<dbReference type="InParanoid" id="P27815"/>
<dbReference type="OMA" id="DDQSRGH"/>
<dbReference type="OrthoDB" id="189220at2759"/>
<dbReference type="PAN-GO" id="P27815">
    <property type="GO annotations" value="5 GO annotations based on evolutionary models"/>
</dbReference>
<dbReference type="PhylomeDB" id="P27815"/>
<dbReference type="TreeFam" id="TF314638"/>
<dbReference type="BRENDA" id="3.1.4.17">
    <property type="organism ID" value="2681"/>
</dbReference>
<dbReference type="BRENDA" id="3.1.4.53">
    <property type="organism ID" value="2681"/>
</dbReference>
<dbReference type="PathwayCommons" id="P27815"/>
<dbReference type="Reactome" id="R-HSA-180024">
    <property type="pathway name" value="DARPP-32 events"/>
</dbReference>
<dbReference type="Reactome" id="R-HSA-418555">
    <property type="pathway name" value="G alpha (s) signalling events"/>
</dbReference>
<dbReference type="SABIO-RK" id="P27815"/>
<dbReference type="SignaLink" id="P27815"/>
<dbReference type="SIGNOR" id="P27815"/>
<dbReference type="UniPathway" id="UPA00762">
    <property type="reaction ID" value="UER00747"/>
</dbReference>
<dbReference type="BioGRID-ORCS" id="5141">
    <property type="hits" value="22 hits in 1165 CRISPR screens"/>
</dbReference>
<dbReference type="ChiTaRS" id="PDE4A">
    <property type="organism name" value="human"/>
</dbReference>
<dbReference type="EvolutionaryTrace" id="P27815"/>
<dbReference type="GeneWiki" id="PDE4A"/>
<dbReference type="GenomeRNAi" id="5141"/>
<dbReference type="Pharos" id="P27815">
    <property type="development level" value="Tclin"/>
</dbReference>
<dbReference type="PRO" id="PR:P27815"/>
<dbReference type="Proteomes" id="UP000005640">
    <property type="component" value="Chromosome 19"/>
</dbReference>
<dbReference type="RNAct" id="P27815">
    <property type="molecule type" value="protein"/>
</dbReference>
<dbReference type="Bgee" id="ENSG00000065989">
    <property type="expression patterns" value="Expressed in pancreatic ductal cell and 186 other cell types or tissues"/>
</dbReference>
<dbReference type="ExpressionAtlas" id="P27815">
    <property type="expression patterns" value="baseline and differential"/>
</dbReference>
<dbReference type="GO" id="GO:0005829">
    <property type="term" value="C:cytosol"/>
    <property type="evidence" value="ECO:0000314"/>
    <property type="project" value="UniProtKB"/>
</dbReference>
<dbReference type="GO" id="GO:0019898">
    <property type="term" value="C:extrinsic component of membrane"/>
    <property type="evidence" value="ECO:0000314"/>
    <property type="project" value="UniProtKB"/>
</dbReference>
<dbReference type="GO" id="GO:0016020">
    <property type="term" value="C:membrane"/>
    <property type="evidence" value="ECO:0000304"/>
    <property type="project" value="ProtInc"/>
</dbReference>
<dbReference type="GO" id="GO:0005654">
    <property type="term" value="C:nucleoplasm"/>
    <property type="evidence" value="ECO:0000314"/>
    <property type="project" value="HPA"/>
</dbReference>
<dbReference type="GO" id="GO:0048471">
    <property type="term" value="C:perinuclear region of cytoplasm"/>
    <property type="evidence" value="ECO:0000314"/>
    <property type="project" value="UniProtKB"/>
</dbReference>
<dbReference type="GO" id="GO:0005886">
    <property type="term" value="C:plasma membrane"/>
    <property type="evidence" value="ECO:0000314"/>
    <property type="project" value="HPA"/>
</dbReference>
<dbReference type="GO" id="GO:0032587">
    <property type="term" value="C:ruffle membrane"/>
    <property type="evidence" value="ECO:0007669"/>
    <property type="project" value="UniProtKB-SubCell"/>
</dbReference>
<dbReference type="GO" id="GO:0004115">
    <property type="term" value="F:3',5'-cyclic-AMP phosphodiesterase activity"/>
    <property type="evidence" value="ECO:0000314"/>
    <property type="project" value="BHF-UCL"/>
</dbReference>
<dbReference type="GO" id="GO:0047555">
    <property type="term" value="F:3',5'-cyclic-GMP phosphodiesterase activity"/>
    <property type="evidence" value="ECO:0000318"/>
    <property type="project" value="GO_Central"/>
</dbReference>
<dbReference type="GO" id="GO:0030552">
    <property type="term" value="F:cAMP binding"/>
    <property type="evidence" value="ECO:0000316"/>
    <property type="project" value="BHF-UCL"/>
</dbReference>
<dbReference type="GO" id="GO:0046872">
    <property type="term" value="F:metal ion binding"/>
    <property type="evidence" value="ECO:0007669"/>
    <property type="project" value="UniProtKB-KW"/>
</dbReference>
<dbReference type="GO" id="GO:0006198">
    <property type="term" value="P:cAMP catabolic process"/>
    <property type="evidence" value="ECO:0000314"/>
    <property type="project" value="UniProtKB"/>
</dbReference>
<dbReference type="GO" id="GO:0019933">
    <property type="term" value="P:cAMP-mediated signaling"/>
    <property type="evidence" value="ECO:0000318"/>
    <property type="project" value="GO_Central"/>
</dbReference>
<dbReference type="GO" id="GO:0071466">
    <property type="term" value="P:cellular response to xenobiotic stimulus"/>
    <property type="evidence" value="ECO:0007669"/>
    <property type="project" value="Ensembl"/>
</dbReference>
<dbReference type="GO" id="GO:0007186">
    <property type="term" value="P:G protein-coupled receptor signaling pathway"/>
    <property type="evidence" value="ECO:0000304"/>
    <property type="project" value="Reactome"/>
</dbReference>
<dbReference type="GO" id="GO:0106070">
    <property type="term" value="P:regulation of adenylate cyclase-activating G protein-coupled receptor signaling pathway"/>
    <property type="evidence" value="ECO:0007669"/>
    <property type="project" value="Ensembl"/>
</dbReference>
<dbReference type="GO" id="GO:0141161">
    <property type="term" value="P:regulation of cAMP/PKA signal transduction"/>
    <property type="evidence" value="ECO:0007669"/>
    <property type="project" value="Ensembl"/>
</dbReference>
<dbReference type="GO" id="GO:0007608">
    <property type="term" value="P:sensory perception of smell"/>
    <property type="evidence" value="ECO:0007669"/>
    <property type="project" value="Ensembl"/>
</dbReference>
<dbReference type="GO" id="GO:0007165">
    <property type="term" value="P:signal transduction"/>
    <property type="evidence" value="ECO:0000304"/>
    <property type="project" value="ProtInc"/>
</dbReference>
<dbReference type="CDD" id="cd00077">
    <property type="entry name" value="HDc"/>
    <property type="match status" value="1"/>
</dbReference>
<dbReference type="FunFam" id="1.10.1300.10:FF:000001">
    <property type="entry name" value="Phosphodiesterase"/>
    <property type="match status" value="1"/>
</dbReference>
<dbReference type="Gene3D" id="1.10.1300.10">
    <property type="entry name" value="3'5'-cyclic nucleotide phosphodiesterase, catalytic domain"/>
    <property type="match status" value="1"/>
</dbReference>
<dbReference type="InterPro" id="IPR003607">
    <property type="entry name" value="HD/PDEase_dom"/>
</dbReference>
<dbReference type="InterPro" id="IPR040844">
    <property type="entry name" value="PDE4_UCR"/>
</dbReference>
<dbReference type="InterPro" id="IPR023088">
    <property type="entry name" value="PDEase"/>
</dbReference>
<dbReference type="InterPro" id="IPR002073">
    <property type="entry name" value="PDEase_catalytic_dom"/>
</dbReference>
<dbReference type="InterPro" id="IPR036971">
    <property type="entry name" value="PDEase_catalytic_dom_sf"/>
</dbReference>
<dbReference type="InterPro" id="IPR023174">
    <property type="entry name" value="PDEase_CS"/>
</dbReference>
<dbReference type="PANTHER" id="PTHR11347">
    <property type="entry name" value="CYCLIC NUCLEOTIDE PHOSPHODIESTERASE"/>
    <property type="match status" value="1"/>
</dbReference>
<dbReference type="Pfam" id="PF18100">
    <property type="entry name" value="PDE4_UCR"/>
    <property type="match status" value="1"/>
</dbReference>
<dbReference type="Pfam" id="PF00233">
    <property type="entry name" value="PDEase_I"/>
    <property type="match status" value="1"/>
</dbReference>
<dbReference type="PRINTS" id="PR00387">
    <property type="entry name" value="PDIESTERASE1"/>
</dbReference>
<dbReference type="SMART" id="SM00471">
    <property type="entry name" value="HDc"/>
    <property type="match status" value="1"/>
</dbReference>
<dbReference type="SUPFAM" id="SSF109604">
    <property type="entry name" value="HD-domain/PDEase-like"/>
    <property type="match status" value="1"/>
</dbReference>
<dbReference type="PROSITE" id="PS00126">
    <property type="entry name" value="PDEASE_I_1"/>
    <property type="match status" value="1"/>
</dbReference>
<dbReference type="PROSITE" id="PS51845">
    <property type="entry name" value="PDEASE_I_2"/>
    <property type="match status" value="1"/>
</dbReference>
<organism>
    <name type="scientific">Homo sapiens</name>
    <name type="common">Human</name>
    <dbReference type="NCBI Taxonomy" id="9606"/>
    <lineage>
        <taxon>Eukaryota</taxon>
        <taxon>Metazoa</taxon>
        <taxon>Chordata</taxon>
        <taxon>Craniata</taxon>
        <taxon>Vertebrata</taxon>
        <taxon>Euteleostomi</taxon>
        <taxon>Mammalia</taxon>
        <taxon>Eutheria</taxon>
        <taxon>Euarchontoglires</taxon>
        <taxon>Primates</taxon>
        <taxon>Haplorrhini</taxon>
        <taxon>Catarrhini</taxon>
        <taxon>Hominidae</taxon>
        <taxon>Homo</taxon>
    </lineage>
</organism>
<sequence>MEPPTVPSERSLSLSLPGPREGQATLKPPPQHLWRQPRTPIRIQQRGYSDSAERAERERQPHRPIERADAMDTSDRPGLRTTRMSWPSSFHGTGTGSGGAGGGSSRRFEAENGPTPSPGRSPLDSQASPGLVLHAGAATSQRRESFLYRSDSDYDMSPKTMSRNSSVTSEAHAEDLIVTPFAQVLASLRSVRSNFSLLTNVPVPSNKRSPLGGPTPVCKATLSEETCQQLARETLEELDWCLEQLETMQTYRSVSEMASHKFKRMLNRELTHLSEMSRSGNQVSEYISTTFLDKQNEVEIPSPTMKEREKQQAPRPRPSQPPPPPVPHLQPMSQITGLKKLMHSNSLNNSNIPRFGVKTDQEELLAQELENLNKWGLNIFCVSDYAGGRSLTCIMYMIFQERDLLKKFRIPVDTMVTYMLTLEDHYHADVAYHNSLHAADVLQSTHVLLATPALDAVFTDLEILAALFAAAIHDVDHPGVSNQFLINTNSELALMYNDESVLENHHLAVGFKLLQEDNCDIFQNLSKRQRQSLRKMVIDMVLATDMSKHMTLLADLKTMVETKKVTSSGVLLLDNYSDRIQVLRNMVHCADLSNPTKPLELYRQWTDRIMAEFFQQGDRERERGMEISPMCDKHTASVEKSQVGFIDYIVHPLWETWADLVHPDAQEILDTLEDNRDWYYSAIRQSPSPPPEEESRGPGHPPLPDKFQFELTLEEEEEEEISMAQIPCTAQEALTAQGLSGVEEALDATIAWEASPAQESLEVMAQEASLEAELEAVYLTQQAQSTGSAPVAPDEFSSREEFVVAVSHSSPSALALQSPLLPAWRTLSVSEHAPGLPGLPSTAAEVEAQREHQAAKRACSACAGTFGEDTSALPAPGGGGSGGDPT</sequence>
<reference key="1">
    <citation type="journal article" date="1993" name="Mol. Cell. Biol.">
        <title>A family of human phosphodiesterases homologous to the dunce learning and memory gene product of Drosophila melanogaster are potential targets for antidepressant drugs.</title>
        <authorList>
            <person name="Bolger G."/>
            <person name="Michaeli T."/>
            <person name="Martins T."/>
            <person name="St John T."/>
            <person name="Steiner B."/>
            <person name="Rodgers L."/>
            <person name="Riggs M."/>
            <person name="Wigler M."/>
            <person name="Ferguson K."/>
        </authorList>
    </citation>
    <scope>NUCLEOTIDE SEQUENCE [MRNA] (ISOFORM 1)</scope>
</reference>
<reference key="2">
    <citation type="journal article" date="1994" name="Cell. Signal.">
        <title>Molecular cloning and expression, in both COS-1 cells and S. cerevisiae, of a human cytosolic type-IVA, cyclic AMP specific phosphodiesterase (hPDE-IVA-h6.1).</title>
        <authorList>
            <person name="Sullivan M."/>
            <person name="Egerton M."/>
            <person name="Shakur Y."/>
            <person name="Marquardsen A."/>
            <person name="Houslay M.D."/>
        </authorList>
    </citation>
    <scope>NUCLEOTIDE SEQUENCE [MRNA] (ISOFORM 3)</scope>
    <scope>FUNCTION (ISOFORM 3)</scope>
    <scope>CATALYTIC ACTIVITY (ISOFORM 3)</scope>
    <scope>ACTIVITY REGULATION (ISOFORM 3)</scope>
    <scope>BIOPHYSICOCHEMICAL PROPERTIES (ISOFORM 3)</scope>
    <scope>SUBCELLULAR LOCATION (ISOFORM 3)</scope>
</reference>
<reference key="3">
    <citation type="journal article" date="1995" name="Biochem. J.">
        <title>Molecular cloning of a novel splice variant of human type IVA (PDE-IVA) cyclic AMP phosphodiesterase and localization of the gene to the p13.2-q12 region of human chromosome 19.</title>
        <authorList>
            <person name="Horton Y.M."/>
            <person name="Sullivan M."/>
            <person name="Houslay M.D."/>
        </authorList>
    </citation>
    <scope>NUCLEOTIDE SEQUENCE [MRNA] (ISOFORMS 3 AND 5)</scope>
    <scope>VARIANT GLU-736</scope>
</reference>
<reference key="4">
    <citation type="journal article" date="1998" name="Biochem. J.">
        <title>Identification and characterization of the human homologue of the short PDE4A cAMP-specific phosphodiesterase 4A variant RD1 (PDE4A1) by analysis of the human HSPDE4A gene locus located at chromosome 19p13.2.</title>
        <authorList>
            <person name="Sullivan M."/>
            <person name="Rena G."/>
            <person name="Begg F."/>
            <person name="Gordon L."/>
            <person name="Olsen A.S."/>
            <person name="Houslay M.D."/>
        </authorList>
    </citation>
    <scope>NUCLEOTIDE SEQUENCE [GENOMIC DNA / MRNA] (ISOFORMS 1; 2; 3; 4 AND 5)</scope>
    <scope>FUNCTION (ISOFORM 4)</scope>
    <scope>CATALYTIC ACTIVITY (ISOFORM 4)</scope>
    <scope>ACTIVITY REGULATION (ISOFORM 4)</scope>
    <scope>SUBCELLULAR LOCATION (ISOFORM 4)</scope>
    <source>
        <tissue>Brain</tissue>
    </source>
</reference>
<reference key="5">
    <citation type="journal article" date="2001" name="Mol. Pharmacol.">
        <title>Molecular cloning, genomic positioning, promoter identification, and characterization of the novel cyclic AMP-specific phosphodiesterase PDE4A10.</title>
        <authorList>
            <person name="Rena G."/>
            <person name="Begg F."/>
            <person name="Ross A."/>
            <person name="MacKenzie C."/>
            <person name="McPhee I."/>
            <person name="Campbell L."/>
            <person name="Huston E."/>
            <person name="Sullivan M."/>
            <person name="Houslay M.D."/>
        </authorList>
    </citation>
    <scope>NUCLEOTIDE SEQUENCE [MRNA] (ISOFORM 6)</scope>
    <scope>FUNCTION (ISOFORMS 1 AND 6)</scope>
    <scope>CATALYTIC ACTIVITY (ISOFORMS 1 AND 6)</scope>
    <scope>SUBCELLULAR LOCATION (ISOFORM 6)</scope>
    <scope>BIOPHYSICOCHEMICAL PROPERTIES (ISOFORM 6)</scope>
    <scope>ACTIVITY REGULATION (ISOFORM 6)</scope>
    <scope>TISSUE SPECIFICITY (ISOFORM 6)</scope>
    <scope>INTERACTION WITH LYN (ISOFORMS 1 AND 6)</scope>
    <source>
        <tissue>Brain</tissue>
    </source>
</reference>
<reference key="6">
    <citation type="journal article" date="2005" name="Mol. Pharmacol.">
        <title>Identification and characterization of PDE4A11, a novel, widely expressed long isoform encoded by the human PDE4A cAMP phosphodiesterase gene.</title>
        <authorList>
            <person name="Wallace D.A."/>
            <person name="Johnston L.A."/>
            <person name="Huston E."/>
            <person name="Macmaster D."/>
            <person name="Houslay T.M."/>
            <person name="Cheung Y.-F."/>
            <person name="Campbell L."/>
            <person name="Millen J.E."/>
            <person name="Smith R.A."/>
            <person name="Gall I."/>
            <person name="Knowles R.G."/>
            <person name="Sullivan M."/>
            <person name="Houslay M.D."/>
        </authorList>
    </citation>
    <scope>NUCLEOTIDE SEQUENCE [MRNA] (ISOFORM 2)</scope>
    <scope>FUNCTION (ISOFORMS 1; 2 AND 6)</scope>
    <scope>CATALYTIC ACTIVITY (ISOFORMS 1; 2 AND 6)</scope>
    <scope>ACTIVITY REGULATION (ISOFORMS 1; 2 AND 6)</scope>
    <scope>BIOPHYSICOCHEMICAL PROPERTIES (ISOFORM 2)</scope>
    <scope>PATHWAY</scope>
    <scope>SUBCELLULAR LOCATION (ISOFORMS 1; 2 AND 6)</scope>
    <scope>PHOSPHORYLATION AT SER-119 (ISOFORM 2)</scope>
    <scope>CLEAVAGE BY CASPASE-3 (ISOFORM 1)</scope>
    <scope>INTERACTION WITH LYN AND ARRB2 (ISOFORMS 1; 2 AND 6)</scope>
    <scope>TISSUE SPECIFICITY (ISOFORMS 1 AND 2)</scope>
    <scope>DEVELOPMENTAL STAGE (ISOFORM 2)</scope>
</reference>
<reference key="7">
    <citation type="journal article" date="2008" name="Biochem. J.">
        <title>Human PDE4A8, a novel brain-expressed PDE4 cAMP-specific phosphodiesterase that has undergone rapid evolutionary change.</title>
        <authorList>
            <person name="Mackenzie K.F."/>
            <person name="Topping E.C."/>
            <person name="Bugaj-Gaweda B."/>
            <person name="Deng C."/>
            <person name="Cheung Y.-F."/>
            <person name="Olsen A.E."/>
            <person name="Stockard C.R."/>
            <person name="High Mitchell L."/>
            <person name="Baillie G.S."/>
            <person name="Grizzle W.E."/>
            <person name="De Vivo M."/>
            <person name="Houslay M.D."/>
            <person name="Wang D."/>
            <person name="Bolger G.B."/>
        </authorList>
    </citation>
    <scope>NUCLEOTIDE SEQUENCE [MRNA] (ISOFORM 7)</scope>
    <scope>FUNCTION (ISOFORM 7)</scope>
    <scope>CATALYTIC ACTIVITY (ISOFORM 7)</scope>
    <scope>ACTIVITY REGULATION (ISOFORM 7)</scope>
    <scope>SUBCELLULAR LOCATION (ISOFORM 7)</scope>
    <scope>TISSUE SPECIFICITY (ISOFORM 7)</scope>
    <scope>PHOSPHORYLATION AT SER-123 (ISOFORM 7)</scope>
</reference>
<reference key="8">
    <citation type="journal article" date="2004" name="Nature">
        <title>The DNA sequence and biology of human chromosome 19.</title>
        <authorList>
            <person name="Grimwood J."/>
            <person name="Gordon L.A."/>
            <person name="Olsen A.S."/>
            <person name="Terry A."/>
            <person name="Schmutz J."/>
            <person name="Lamerdin J.E."/>
            <person name="Hellsten U."/>
            <person name="Goodstein D."/>
            <person name="Couronne O."/>
            <person name="Tran-Gyamfi M."/>
            <person name="Aerts A."/>
            <person name="Altherr M."/>
            <person name="Ashworth L."/>
            <person name="Bajorek E."/>
            <person name="Black S."/>
            <person name="Branscomb E."/>
            <person name="Caenepeel S."/>
            <person name="Carrano A.V."/>
            <person name="Caoile C."/>
            <person name="Chan Y.M."/>
            <person name="Christensen M."/>
            <person name="Cleland C.A."/>
            <person name="Copeland A."/>
            <person name="Dalin E."/>
            <person name="Dehal P."/>
            <person name="Denys M."/>
            <person name="Detter J.C."/>
            <person name="Escobar J."/>
            <person name="Flowers D."/>
            <person name="Fotopulos D."/>
            <person name="Garcia C."/>
            <person name="Georgescu A.M."/>
            <person name="Glavina T."/>
            <person name="Gomez M."/>
            <person name="Gonzales E."/>
            <person name="Groza M."/>
            <person name="Hammon N."/>
            <person name="Hawkins T."/>
            <person name="Haydu L."/>
            <person name="Ho I."/>
            <person name="Huang W."/>
            <person name="Israni S."/>
            <person name="Jett J."/>
            <person name="Kadner K."/>
            <person name="Kimball H."/>
            <person name="Kobayashi A."/>
            <person name="Larionov V."/>
            <person name="Leem S.-H."/>
            <person name="Lopez F."/>
            <person name="Lou Y."/>
            <person name="Lowry S."/>
            <person name="Malfatti S."/>
            <person name="Martinez D."/>
            <person name="McCready P.M."/>
            <person name="Medina C."/>
            <person name="Morgan J."/>
            <person name="Nelson K."/>
            <person name="Nolan M."/>
            <person name="Ovcharenko I."/>
            <person name="Pitluck S."/>
            <person name="Pollard M."/>
            <person name="Popkie A.P."/>
            <person name="Predki P."/>
            <person name="Quan G."/>
            <person name="Ramirez L."/>
            <person name="Rash S."/>
            <person name="Retterer J."/>
            <person name="Rodriguez A."/>
            <person name="Rogers S."/>
            <person name="Salamov A."/>
            <person name="Salazar A."/>
            <person name="She X."/>
            <person name="Smith D."/>
            <person name="Slezak T."/>
            <person name="Solovyev V."/>
            <person name="Thayer N."/>
            <person name="Tice H."/>
            <person name="Tsai M."/>
            <person name="Ustaszewska A."/>
            <person name="Vo N."/>
            <person name="Wagner M."/>
            <person name="Wheeler J."/>
            <person name="Wu K."/>
            <person name="Xie G."/>
            <person name="Yang J."/>
            <person name="Dubchak I."/>
            <person name="Furey T.S."/>
            <person name="DeJong P."/>
            <person name="Dickson M."/>
            <person name="Gordon D."/>
            <person name="Eichler E.E."/>
            <person name="Pennacchio L.A."/>
            <person name="Richardson P."/>
            <person name="Stubbs L."/>
            <person name="Rokhsar D.S."/>
            <person name="Myers R.M."/>
            <person name="Rubin E.M."/>
            <person name="Lucas S.M."/>
        </authorList>
    </citation>
    <scope>NUCLEOTIDE SEQUENCE [LARGE SCALE GENOMIC DNA]</scope>
</reference>
<reference key="9">
    <citation type="submission" date="2005-07" db="EMBL/GenBank/DDBJ databases">
        <authorList>
            <person name="Mural R.J."/>
            <person name="Istrail S."/>
            <person name="Sutton G.G."/>
            <person name="Florea L."/>
            <person name="Halpern A.L."/>
            <person name="Mobarry C.M."/>
            <person name="Lippert R."/>
            <person name="Walenz B."/>
            <person name="Shatkay H."/>
            <person name="Dew I."/>
            <person name="Miller J.R."/>
            <person name="Flanigan M.J."/>
            <person name="Edwards N.J."/>
            <person name="Bolanos R."/>
            <person name="Fasulo D."/>
            <person name="Halldorsson B.V."/>
            <person name="Hannenhalli S."/>
            <person name="Turner R."/>
            <person name="Yooseph S."/>
            <person name="Lu F."/>
            <person name="Nusskern D.R."/>
            <person name="Shue B.C."/>
            <person name="Zheng X.H."/>
            <person name="Zhong F."/>
            <person name="Delcher A.L."/>
            <person name="Huson D.H."/>
            <person name="Kravitz S.A."/>
            <person name="Mouchard L."/>
            <person name="Reinert K."/>
            <person name="Remington K.A."/>
            <person name="Clark A.G."/>
            <person name="Waterman M.S."/>
            <person name="Eichler E.E."/>
            <person name="Adams M.D."/>
            <person name="Hunkapiller M.W."/>
            <person name="Myers E.W."/>
            <person name="Venter J.C."/>
        </authorList>
    </citation>
    <scope>NUCLEOTIDE SEQUENCE [LARGE SCALE GENOMIC DNA]</scope>
</reference>
<reference key="10">
    <citation type="journal article" date="2004" name="Genome Res.">
        <title>The status, quality, and expansion of the NIH full-length cDNA project: the Mammalian Gene Collection (MGC).</title>
        <authorList>
            <consortium name="The MGC Project Team"/>
        </authorList>
    </citation>
    <scope>NUCLEOTIDE SEQUENCE [LARGE SCALE MRNA] (ISOFORM 4)</scope>
    <source>
        <tissue>Brain</tissue>
    </source>
</reference>
<reference key="11">
    <citation type="journal article" date="1990" name="Mol. Cell. Biol.">
        <title>Cloning and expression of cDNA for a human low-Km, rolipram-sensitive cyclic AMP phosphodiesterase.</title>
        <authorList>
            <person name="Livi G.P."/>
            <person name="Kmetz P."/>
            <person name="McHale M.M."/>
            <person name="Cieslinski L.B."/>
            <person name="Sathe G.M."/>
            <person name="Taylor D.P."/>
            <person name="Davis R.L."/>
            <person name="Torphy T.J."/>
            <person name="Balcarek J.M."/>
        </authorList>
    </citation>
    <scope>NUCLEOTIDE SEQUENCE [MRNA] OF 112-886</scope>
    <scope>VARIANT GLU-736</scope>
    <scope>FUNCTION</scope>
    <scope>CATALYTIC ACTIVITY</scope>
    <source>
        <tissue>Monocyte</tissue>
    </source>
</reference>
<reference key="12">
    <citation type="submission" date="1991-01" db="EMBL/GenBank/DDBJ databases">
        <authorList>
            <person name="McLaughlin M.M."/>
        </authorList>
    </citation>
    <scope>SEQUENCE REVISION</scope>
</reference>
<reference key="13">
    <citation type="journal article" date="2001" name="Arch. Biochem. Biophys.">
        <title>Purification and characterization of the human pde4a catalytic domain (pde4a(330-723)) expressed in sf9 cells.</title>
        <authorList>
            <person name="Lario P.I."/>
            <person name="Bobechko B."/>
            <person name="Bateman K."/>
            <person name="Kelly J."/>
            <person name="Vrielink A."/>
            <person name="Huang Z."/>
        </authorList>
    </citation>
    <scope>FUNCTION</scope>
    <scope>CATALYTIC ACTIVITY</scope>
    <scope>BIOPHYSICOCHEMICAL PROPERTIES</scope>
    <scope>COFACTOR</scope>
    <scope>PHOSPHORYLATION AT SER-686 AND SER-688</scope>
    <scope>IDENTIFICATION BY MASS SPECTROMETRY</scope>
</reference>
<reference key="14">
    <citation type="journal article" date="2004" name="Genome Biol.">
        <title>An unappreciated role for RNA surveillance.</title>
        <authorList>
            <person name="Hillman R.T."/>
            <person name="Green R.E."/>
            <person name="Brenner S.E."/>
        </authorList>
    </citation>
    <scope>SPLICE ISOFORM(S) THAT ARE POTENTIAL NMD TARGET(S)</scope>
</reference>
<reference key="15">
    <citation type="journal article" date="2008" name="Proc. Natl. Acad. Sci. U.S.A.">
        <title>A quantitative atlas of mitotic phosphorylation.</title>
        <authorList>
            <person name="Dephoure N."/>
            <person name="Zhou C."/>
            <person name="Villen J."/>
            <person name="Beausoleil S.A."/>
            <person name="Bakalarski C.E."/>
            <person name="Elledge S.J."/>
            <person name="Gygi S.P."/>
        </authorList>
    </citation>
    <scope>IDENTIFICATION BY MASS SPECTROMETRY [LARGE SCALE ANALYSIS]</scope>
    <source>
        <tissue>Cervix carcinoma</tissue>
    </source>
</reference>
<reference key="16">
    <citation type="journal article" date="2009" name="Sci. Signal.">
        <title>Quantitative phosphoproteomic analysis of T cell receptor signaling reveals system-wide modulation of protein-protein interactions.</title>
        <authorList>
            <person name="Mayya V."/>
            <person name="Lundgren D.H."/>
            <person name="Hwang S.-I."/>
            <person name="Rezaul K."/>
            <person name="Wu L."/>
            <person name="Eng J.K."/>
            <person name="Rodionov V."/>
            <person name="Han D.K."/>
        </authorList>
    </citation>
    <scope>PHOSPHORYLATION [LARGE SCALE ANALYSIS] AT SER-165</scope>
    <scope>IDENTIFICATION BY MASS SPECTROMETRY [LARGE SCALE ANALYSIS]</scope>
    <source>
        <tissue>Leukemic T-cell</tissue>
    </source>
</reference>
<reference key="17">
    <citation type="journal article" date="2010" name="Biochem. J.">
        <title>Selective SUMO modification of cAMP-specific phosphodiesterase-4D5 (PDE4D5) regulates the functional consequences of phosphorylation by PKA and ERK.</title>
        <authorList>
            <person name="Li X."/>
            <person name="Vadrevu S."/>
            <person name="Dunlop A."/>
            <person name="Day J."/>
            <person name="Advant N."/>
            <person name="Troeger J."/>
            <person name="Klussmann E."/>
            <person name="Jaffrey E."/>
            <person name="Hay R.T."/>
            <person name="Adams D.R."/>
            <person name="Houslay M.D."/>
            <person name="Baillie G.S."/>
        </authorList>
    </citation>
    <scope>SUMOYLATION AT LYS-358 BY PIAS4</scope>
</reference>
<reference key="18">
    <citation type="journal article" date="2013" name="J. Proteome Res.">
        <title>Toward a comprehensive characterization of a human cancer cell phosphoproteome.</title>
        <authorList>
            <person name="Zhou H."/>
            <person name="Di Palma S."/>
            <person name="Preisinger C."/>
            <person name="Peng M."/>
            <person name="Polat A.N."/>
            <person name="Heck A.J."/>
            <person name="Mohammed S."/>
        </authorList>
    </citation>
    <scope>PHOSPHORYLATION [LARGE SCALE ANALYSIS] AT SER-13; SER-209 AND SER-346</scope>
    <scope>IDENTIFICATION BY MASS SPECTROMETRY [LARGE SCALE ANALYSIS]</scope>
    <source>
        <tissue>Erythroleukemia</tissue>
    </source>
</reference>
<reference evidence="33" key="19">
    <citation type="journal article" date="2007" name="Biochem. J.">
        <title>Structures of the four subfamilies of phosphodiesterase-4 provide insight into the selectivity of their inhibitors.</title>
        <authorList>
            <person name="Wang H."/>
            <person name="Peng M.-S."/>
            <person name="Chen Y."/>
            <person name="Geng J."/>
            <person name="Robinson H."/>
            <person name="Houslay M.D."/>
            <person name="Cai J."/>
            <person name="Ke H."/>
        </authorList>
    </citation>
    <scope>X-RAY CRYSTALLOGRAPHY (2.10 ANGSTROMS) OF 351-683 IN COMPLEX WITH ZINC; MAGNESIUM AND THE INHIBITOR NVP</scope>
    <scope>FUNCTION (ISOFORM 6)</scope>
    <scope>CATALYTIC ACTIVITY (ISOFORM 6)</scope>
    <scope>COFACTOR</scope>
</reference>
<reference evidence="34" key="20">
    <citation type="submission" date="2009-07" db="PDB data bank">
        <title>Crystal structure of human PDE4a with 4-(3-butoxy-4-methoxyphenyl)methyl-2-imidazolidone.</title>
        <authorList>
            <person name="Cheng R.K.Y."/>
            <person name="Crawley L."/>
            <person name="Barker J."/>
            <person name="Wood M."/>
            <person name="Felicetti B."/>
            <person name="Whittaker M."/>
        </authorList>
    </citation>
    <scope>X-RAY CRYSTALLOGRAPHY (2.25 ANGSTROMS) OF 351-683 IN COMPLEX WITH ZINC; MAGNESIUM AND INHIBITOR</scope>
    <scope>COFACTOR</scope>
</reference>
<gene>
    <name type="primary">PDE4A</name>
    <name type="synonym">DPDE2</name>
</gene>